<reference key="1">
    <citation type="journal article" date="2001" name="Science">
        <title>Comparative genomics of Listeria species.</title>
        <authorList>
            <person name="Glaser P."/>
            <person name="Frangeul L."/>
            <person name="Buchrieser C."/>
            <person name="Rusniok C."/>
            <person name="Amend A."/>
            <person name="Baquero F."/>
            <person name="Berche P."/>
            <person name="Bloecker H."/>
            <person name="Brandt P."/>
            <person name="Chakraborty T."/>
            <person name="Charbit A."/>
            <person name="Chetouani F."/>
            <person name="Couve E."/>
            <person name="de Daruvar A."/>
            <person name="Dehoux P."/>
            <person name="Domann E."/>
            <person name="Dominguez-Bernal G."/>
            <person name="Duchaud E."/>
            <person name="Durant L."/>
            <person name="Dussurget O."/>
            <person name="Entian K.-D."/>
            <person name="Fsihi H."/>
            <person name="Garcia-del Portillo F."/>
            <person name="Garrido P."/>
            <person name="Gautier L."/>
            <person name="Goebel W."/>
            <person name="Gomez-Lopez N."/>
            <person name="Hain T."/>
            <person name="Hauf J."/>
            <person name="Jackson D."/>
            <person name="Jones L.-M."/>
            <person name="Kaerst U."/>
            <person name="Kreft J."/>
            <person name="Kuhn M."/>
            <person name="Kunst F."/>
            <person name="Kurapkat G."/>
            <person name="Madueno E."/>
            <person name="Maitournam A."/>
            <person name="Mata Vicente J."/>
            <person name="Ng E."/>
            <person name="Nedjari H."/>
            <person name="Nordsiek G."/>
            <person name="Novella S."/>
            <person name="de Pablos B."/>
            <person name="Perez-Diaz J.-C."/>
            <person name="Purcell R."/>
            <person name="Remmel B."/>
            <person name="Rose M."/>
            <person name="Schlueter T."/>
            <person name="Simoes N."/>
            <person name="Tierrez A."/>
            <person name="Vazquez-Boland J.-A."/>
            <person name="Voss H."/>
            <person name="Wehland J."/>
            <person name="Cossart P."/>
        </authorList>
    </citation>
    <scope>NUCLEOTIDE SEQUENCE [LARGE SCALE GENOMIC DNA]</scope>
    <source>
        <strain>ATCC BAA-679 / EGD-e</strain>
    </source>
</reference>
<keyword id="KW-0963">Cytoplasm</keyword>
<keyword id="KW-1185">Reference proteome</keyword>
<keyword id="KW-0694">RNA-binding</keyword>
<dbReference type="EMBL" id="AL591983">
    <property type="protein sequence ID" value="CAD00526.1"/>
    <property type="molecule type" value="Genomic_DNA"/>
</dbReference>
<dbReference type="PIR" id="AH1380">
    <property type="entry name" value="AH1380"/>
</dbReference>
<dbReference type="RefSeq" id="NP_465971.1">
    <property type="nucleotide sequence ID" value="NC_003210.1"/>
</dbReference>
<dbReference type="RefSeq" id="WP_003723350.1">
    <property type="nucleotide sequence ID" value="NZ_CP149495.1"/>
</dbReference>
<dbReference type="SMR" id="P66860"/>
<dbReference type="STRING" id="169963.gene:17595158"/>
<dbReference type="PaxDb" id="169963-lmo2448"/>
<dbReference type="EnsemblBacteria" id="CAD00526">
    <property type="protein sequence ID" value="CAD00526"/>
    <property type="gene ID" value="CAD00526"/>
</dbReference>
<dbReference type="GeneID" id="93240313"/>
<dbReference type="GeneID" id="987391"/>
<dbReference type="KEGG" id="lmo:lmo2448"/>
<dbReference type="PATRIC" id="fig|169963.11.peg.2507"/>
<dbReference type="eggNOG" id="COG0691">
    <property type="taxonomic scope" value="Bacteria"/>
</dbReference>
<dbReference type="HOGENOM" id="CLU_108953_0_0_9"/>
<dbReference type="OrthoDB" id="9805462at2"/>
<dbReference type="PhylomeDB" id="P66860"/>
<dbReference type="BioCyc" id="LMON169963:LMO2448-MONOMER"/>
<dbReference type="PHI-base" id="PHI:7002"/>
<dbReference type="Proteomes" id="UP000000817">
    <property type="component" value="Chromosome"/>
</dbReference>
<dbReference type="GO" id="GO:0005829">
    <property type="term" value="C:cytosol"/>
    <property type="evidence" value="ECO:0000318"/>
    <property type="project" value="GO_Central"/>
</dbReference>
<dbReference type="GO" id="GO:0003723">
    <property type="term" value="F:RNA binding"/>
    <property type="evidence" value="ECO:0000318"/>
    <property type="project" value="GO_Central"/>
</dbReference>
<dbReference type="GO" id="GO:0070929">
    <property type="term" value="P:trans-translation"/>
    <property type="evidence" value="ECO:0007669"/>
    <property type="project" value="UniProtKB-UniRule"/>
</dbReference>
<dbReference type="CDD" id="cd09294">
    <property type="entry name" value="SmpB"/>
    <property type="match status" value="1"/>
</dbReference>
<dbReference type="Gene3D" id="2.40.280.10">
    <property type="match status" value="1"/>
</dbReference>
<dbReference type="HAMAP" id="MF_00023">
    <property type="entry name" value="SmpB"/>
    <property type="match status" value="1"/>
</dbReference>
<dbReference type="InterPro" id="IPR023620">
    <property type="entry name" value="SmpB"/>
</dbReference>
<dbReference type="InterPro" id="IPR000037">
    <property type="entry name" value="SsrA-bd_prot"/>
</dbReference>
<dbReference type="InterPro" id="IPR020081">
    <property type="entry name" value="SsrA-bd_prot_CS"/>
</dbReference>
<dbReference type="NCBIfam" id="NF003843">
    <property type="entry name" value="PRK05422.1"/>
    <property type="match status" value="1"/>
</dbReference>
<dbReference type="NCBIfam" id="TIGR00086">
    <property type="entry name" value="smpB"/>
    <property type="match status" value="1"/>
</dbReference>
<dbReference type="PANTHER" id="PTHR30308:SF2">
    <property type="entry name" value="SSRA-BINDING PROTEIN"/>
    <property type="match status" value="1"/>
</dbReference>
<dbReference type="PANTHER" id="PTHR30308">
    <property type="entry name" value="TMRNA-BINDING COMPONENT OF TRANS-TRANSLATION TAGGING COMPLEX"/>
    <property type="match status" value="1"/>
</dbReference>
<dbReference type="Pfam" id="PF01668">
    <property type="entry name" value="SmpB"/>
    <property type="match status" value="1"/>
</dbReference>
<dbReference type="SUPFAM" id="SSF74982">
    <property type="entry name" value="Small protein B (SmpB)"/>
    <property type="match status" value="1"/>
</dbReference>
<dbReference type="PROSITE" id="PS01317">
    <property type="entry name" value="SSRP"/>
    <property type="match status" value="1"/>
</dbReference>
<name>SSRP_LISMO</name>
<sequence length="154" mass="17924">MPKGDGKLVAQNKKARHDYAIEETFEAGIVLQGTEIKSVRNARVNLKDSYARIDKGEIFLHNMHISPYEQGNRYNHDPLRTRKLLLHKKQISRLIGETKESGYSIVPLKMYIKDGYAKVLIGVARGKKKYDKRQDLKQKEAKRDIERAFKERQQ</sequence>
<accession>P66860</accession>
<accession>Q928J0</accession>
<protein>
    <recommendedName>
        <fullName evidence="1">SsrA-binding protein</fullName>
    </recommendedName>
    <alternativeName>
        <fullName evidence="1">Small protein B</fullName>
    </alternativeName>
</protein>
<feature type="chain" id="PRO_0000102975" description="SsrA-binding protein">
    <location>
        <begin position="1"/>
        <end position="154"/>
    </location>
</feature>
<feature type="region of interest" description="Disordered" evidence="2">
    <location>
        <begin position="131"/>
        <end position="154"/>
    </location>
</feature>
<feature type="compositionally biased region" description="Basic and acidic residues" evidence="2">
    <location>
        <begin position="132"/>
        <end position="154"/>
    </location>
</feature>
<gene>
    <name evidence="1" type="primary">smpB</name>
    <name type="ordered locus">lmo2448</name>
</gene>
<comment type="function">
    <text evidence="1">Required for rescue of stalled ribosomes mediated by trans-translation. Binds to transfer-messenger RNA (tmRNA), required for stable association of tmRNA with ribosomes. tmRNA and SmpB together mimic tRNA shape, replacing the anticodon stem-loop with SmpB. tmRNA is encoded by the ssrA gene; the 2 termini fold to resemble tRNA(Ala) and it encodes a 'tag peptide', a short internal open reading frame. During trans-translation Ala-aminoacylated tmRNA acts like a tRNA, entering the A-site of stalled ribosomes, displacing the stalled mRNA. The ribosome then switches to translate the ORF on the tmRNA; the nascent peptide is terminated with the 'tag peptide' encoded by the tmRNA and targeted for degradation. The ribosome is freed to recommence translation, which seems to be the essential function of trans-translation.</text>
</comment>
<comment type="subcellular location">
    <subcellularLocation>
        <location evidence="1">Cytoplasm</location>
    </subcellularLocation>
    <text evidence="1">The tmRNA-SmpB complex associates with stalled 70S ribosomes.</text>
</comment>
<comment type="similarity">
    <text evidence="1">Belongs to the SmpB family.</text>
</comment>
<organism>
    <name type="scientific">Listeria monocytogenes serovar 1/2a (strain ATCC BAA-679 / EGD-e)</name>
    <dbReference type="NCBI Taxonomy" id="169963"/>
    <lineage>
        <taxon>Bacteria</taxon>
        <taxon>Bacillati</taxon>
        <taxon>Bacillota</taxon>
        <taxon>Bacilli</taxon>
        <taxon>Bacillales</taxon>
        <taxon>Listeriaceae</taxon>
        <taxon>Listeria</taxon>
    </lineage>
</organism>
<evidence type="ECO:0000255" key="1">
    <source>
        <dbReference type="HAMAP-Rule" id="MF_00023"/>
    </source>
</evidence>
<evidence type="ECO:0000256" key="2">
    <source>
        <dbReference type="SAM" id="MobiDB-lite"/>
    </source>
</evidence>
<proteinExistence type="inferred from homology"/>